<protein>
    <recommendedName>
        <fullName>FK506-binding protein 4</fullName>
        <ecNumber evidence="2">5.2.1.8</ecNumber>
    </recommendedName>
    <alternativeName>
        <fullName evidence="2">Histone proline isomerase</fullName>
    </alternativeName>
    <alternativeName>
        <fullName>Peptidyl-prolyl cis-trans isomerase</fullName>
        <shortName>PPIase</shortName>
    </alternativeName>
    <alternativeName>
        <fullName>Rotamase</fullName>
    </alternativeName>
</protein>
<organism>
    <name type="scientific">Mycosarcoma maydis</name>
    <name type="common">Corn smut fungus</name>
    <name type="synonym">Ustilago maydis</name>
    <dbReference type="NCBI Taxonomy" id="5270"/>
    <lineage>
        <taxon>Eukaryota</taxon>
        <taxon>Fungi</taxon>
        <taxon>Dikarya</taxon>
        <taxon>Basidiomycota</taxon>
        <taxon>Ustilaginomycotina</taxon>
        <taxon>Ustilaginomycetes</taxon>
        <taxon>Ustilaginales</taxon>
        <taxon>Ustilaginaceae</taxon>
        <taxon>Mycosarcoma</taxon>
    </lineage>
</organism>
<reference key="1">
    <citation type="journal article" date="2006" name="Nature">
        <title>Insights from the genome of the biotrophic fungal plant pathogen Ustilago maydis.</title>
        <authorList>
            <person name="Kaemper J."/>
            <person name="Kahmann R."/>
            <person name="Boelker M."/>
            <person name="Ma L.-J."/>
            <person name="Brefort T."/>
            <person name="Saville B.J."/>
            <person name="Banuett F."/>
            <person name="Kronstad J.W."/>
            <person name="Gold S.E."/>
            <person name="Mueller O."/>
            <person name="Perlin M.H."/>
            <person name="Woesten H.A.B."/>
            <person name="de Vries R."/>
            <person name="Ruiz-Herrera J."/>
            <person name="Reynaga-Pena C.G."/>
            <person name="Snetselaar K."/>
            <person name="McCann M."/>
            <person name="Perez-Martin J."/>
            <person name="Feldbruegge M."/>
            <person name="Basse C.W."/>
            <person name="Steinberg G."/>
            <person name="Ibeas J.I."/>
            <person name="Holloman W."/>
            <person name="Guzman P."/>
            <person name="Farman M.L."/>
            <person name="Stajich J.E."/>
            <person name="Sentandreu R."/>
            <person name="Gonzalez-Prieto J.M."/>
            <person name="Kennell J.C."/>
            <person name="Molina L."/>
            <person name="Schirawski J."/>
            <person name="Mendoza-Mendoza A."/>
            <person name="Greilinger D."/>
            <person name="Muench K."/>
            <person name="Roessel N."/>
            <person name="Scherer M."/>
            <person name="Vranes M."/>
            <person name="Ladendorf O."/>
            <person name="Vincon V."/>
            <person name="Fuchs U."/>
            <person name="Sandrock B."/>
            <person name="Meng S."/>
            <person name="Ho E.C.H."/>
            <person name="Cahill M.J."/>
            <person name="Boyce K.J."/>
            <person name="Klose J."/>
            <person name="Klosterman S.J."/>
            <person name="Deelstra H.J."/>
            <person name="Ortiz-Castellanos L."/>
            <person name="Li W."/>
            <person name="Sanchez-Alonso P."/>
            <person name="Schreier P.H."/>
            <person name="Haeuser-Hahn I."/>
            <person name="Vaupel M."/>
            <person name="Koopmann E."/>
            <person name="Friedrich G."/>
            <person name="Voss H."/>
            <person name="Schlueter T."/>
            <person name="Margolis J."/>
            <person name="Platt D."/>
            <person name="Swimmer C."/>
            <person name="Gnirke A."/>
            <person name="Chen F."/>
            <person name="Vysotskaia V."/>
            <person name="Mannhaupt G."/>
            <person name="Gueldener U."/>
            <person name="Muensterkoetter M."/>
            <person name="Haase D."/>
            <person name="Oesterheld M."/>
            <person name="Mewes H.-W."/>
            <person name="Mauceli E.W."/>
            <person name="DeCaprio D."/>
            <person name="Wade C.M."/>
            <person name="Butler J."/>
            <person name="Young S.K."/>
            <person name="Jaffe D.B."/>
            <person name="Calvo S.E."/>
            <person name="Nusbaum C."/>
            <person name="Galagan J.E."/>
            <person name="Birren B.W."/>
        </authorList>
    </citation>
    <scope>NUCLEOTIDE SEQUENCE [LARGE SCALE GENOMIC DNA]</scope>
    <source>
        <strain>DSM 14603 / FGSC 9021 / UM521</strain>
    </source>
</reference>
<reference key="2">
    <citation type="submission" date="2014-09" db="EMBL/GenBank/DDBJ databases">
        <authorList>
            <person name="Gueldener U."/>
            <person name="Muensterkoetter M."/>
            <person name="Walter M.C."/>
            <person name="Mannhaupt G."/>
            <person name="Kahmann R."/>
        </authorList>
    </citation>
    <scope>GENOME REANNOTATION</scope>
    <source>
        <strain>DSM 14603 / FGSC 9021 / UM521</strain>
    </source>
</reference>
<sequence length="375" mass="41079">MSATPIGFFGLKLVPGKVHRMDVSRDFKITNVSYADQPKSNTKTLVKIHYTHVPGFEDDYDEEEQEKEPKSTDEEEEIEEKVYTLCSLNGANKDHAVVDLQFCQEELIGFSITGDAPVDLVGNYVAPPDFFDQDPSDSELYSDDEDDDEDMYGLDSDDFDDDDDDDMDEDPDRFEELVESSASKPKKAIEAAPLADSKKRAAEKPVKETAAKKLKADASAASAASTPTKAIETKGEKQTKGAKDTKPKSETVEKKTVDKSTSKMTTTKLPSGLVIEEKSAGSGPPCKAGQKVGMRYVGKLTNGKVFDQCTSGKPFYFKLGKGEVIKGWDEGVKGMRVGAERRLTCPPKLAYGNQKIPGIPANSTLVFDVKLVEIK</sequence>
<keyword id="KW-0143">Chaperone</keyword>
<keyword id="KW-0413">Isomerase</keyword>
<keyword id="KW-0539">Nucleus</keyword>
<keyword id="KW-1185">Reference proteome</keyword>
<keyword id="KW-0697">Rotamase</keyword>
<name>FKBP4_MYCMD</name>
<proteinExistence type="inferred from homology"/>
<dbReference type="EC" id="5.2.1.8" evidence="2"/>
<dbReference type="EMBL" id="CM003140">
    <property type="protein sequence ID" value="KIS71583.1"/>
    <property type="molecule type" value="Genomic_DNA"/>
</dbReference>
<dbReference type="RefSeq" id="XP_011386003.1">
    <property type="nucleotide sequence ID" value="XM_011387701.1"/>
</dbReference>
<dbReference type="SMR" id="Q4PIN7"/>
<dbReference type="FunCoup" id="Q4PIN7">
    <property type="interactions" value="39"/>
</dbReference>
<dbReference type="STRING" id="237631.Q4PIN7"/>
<dbReference type="EnsemblFungi" id="KIS71583">
    <property type="protein sequence ID" value="KIS71583"/>
    <property type="gene ID" value="UMAG_00026"/>
</dbReference>
<dbReference type="GeneID" id="23561437"/>
<dbReference type="KEGG" id="uma:UMAG_00026"/>
<dbReference type="VEuPathDB" id="FungiDB:UMAG_00026"/>
<dbReference type="eggNOG" id="KOG0552">
    <property type="taxonomic scope" value="Eukaryota"/>
</dbReference>
<dbReference type="HOGENOM" id="CLU_022297_3_0_1"/>
<dbReference type="InParanoid" id="Q4PIN7"/>
<dbReference type="OMA" id="TLVKIHY"/>
<dbReference type="OrthoDB" id="1902587at2759"/>
<dbReference type="Proteomes" id="UP000000561">
    <property type="component" value="Chromosome 1"/>
</dbReference>
<dbReference type="GO" id="GO:0000785">
    <property type="term" value="C:chromatin"/>
    <property type="evidence" value="ECO:0000318"/>
    <property type="project" value="GO_Central"/>
</dbReference>
<dbReference type="GO" id="GO:0005730">
    <property type="term" value="C:nucleolus"/>
    <property type="evidence" value="ECO:0000318"/>
    <property type="project" value="GO_Central"/>
</dbReference>
<dbReference type="GO" id="GO:0003755">
    <property type="term" value="F:peptidyl-prolyl cis-trans isomerase activity"/>
    <property type="evidence" value="ECO:0000318"/>
    <property type="project" value="GO_Central"/>
</dbReference>
<dbReference type="FunFam" id="3.10.50.40:FF:000006">
    <property type="entry name" value="Peptidyl-prolyl cis-trans isomerase"/>
    <property type="match status" value="1"/>
</dbReference>
<dbReference type="Gene3D" id="3.10.50.40">
    <property type="match status" value="1"/>
</dbReference>
<dbReference type="Gene3D" id="2.60.120.340">
    <property type="entry name" value="Nucleoplasmin core domain"/>
    <property type="match status" value="1"/>
</dbReference>
<dbReference type="InterPro" id="IPR041232">
    <property type="entry name" value="NPL"/>
</dbReference>
<dbReference type="InterPro" id="IPR046357">
    <property type="entry name" value="PPIase_dom_sf"/>
</dbReference>
<dbReference type="InterPro" id="IPR001179">
    <property type="entry name" value="PPIase_FKBP_dom"/>
</dbReference>
<dbReference type="InterPro" id="IPR023566">
    <property type="entry name" value="PPIase_Fpr3/Fpr4-like"/>
</dbReference>
<dbReference type="PANTHER" id="PTHR43811:SF19">
    <property type="entry name" value="39 KDA FK506-BINDING NUCLEAR PROTEIN"/>
    <property type="match status" value="1"/>
</dbReference>
<dbReference type="PANTHER" id="PTHR43811">
    <property type="entry name" value="FKBP-TYPE PEPTIDYL-PROLYL CIS-TRANS ISOMERASE FKPA"/>
    <property type="match status" value="1"/>
</dbReference>
<dbReference type="Pfam" id="PF00254">
    <property type="entry name" value="FKBP_C"/>
    <property type="match status" value="1"/>
</dbReference>
<dbReference type="Pfam" id="PF17800">
    <property type="entry name" value="NPL"/>
    <property type="match status" value="1"/>
</dbReference>
<dbReference type="PIRSF" id="PIRSF001473">
    <property type="entry name" value="FK506-bp_FPR3"/>
    <property type="match status" value="1"/>
</dbReference>
<dbReference type="SUPFAM" id="SSF54534">
    <property type="entry name" value="FKBP-like"/>
    <property type="match status" value="1"/>
</dbReference>
<dbReference type="PROSITE" id="PS50059">
    <property type="entry name" value="FKBP_PPIASE"/>
    <property type="match status" value="1"/>
</dbReference>
<evidence type="ECO:0000250" key="1"/>
<evidence type="ECO:0000250" key="2">
    <source>
        <dbReference type="UniProtKB" id="Q06205"/>
    </source>
</evidence>
<evidence type="ECO:0000255" key="3">
    <source>
        <dbReference type="PROSITE-ProRule" id="PRU00277"/>
    </source>
</evidence>
<evidence type="ECO:0000256" key="4">
    <source>
        <dbReference type="SAM" id="MobiDB-lite"/>
    </source>
</evidence>
<evidence type="ECO:0000305" key="5"/>
<accession>Q4PIN7</accession>
<accession>A0A0D1CZA6</accession>
<feature type="chain" id="PRO_0000233085" description="FK506-binding protein 4">
    <location>
        <begin position="1"/>
        <end position="375"/>
    </location>
</feature>
<feature type="domain" description="PPIase FKBP-type" evidence="3">
    <location>
        <begin position="289"/>
        <end position="375"/>
    </location>
</feature>
<feature type="region of interest" description="Disordered" evidence="4">
    <location>
        <begin position="55"/>
        <end position="78"/>
    </location>
</feature>
<feature type="region of interest" description="Disordered" evidence="4">
    <location>
        <begin position="127"/>
        <end position="265"/>
    </location>
</feature>
<feature type="compositionally biased region" description="Acidic residues" evidence="4">
    <location>
        <begin position="56"/>
        <end position="66"/>
    </location>
</feature>
<feature type="compositionally biased region" description="Acidic residues" evidence="4">
    <location>
        <begin position="131"/>
        <end position="173"/>
    </location>
</feature>
<feature type="compositionally biased region" description="Basic and acidic residues" evidence="4">
    <location>
        <begin position="196"/>
        <end position="216"/>
    </location>
</feature>
<feature type="compositionally biased region" description="Low complexity" evidence="4">
    <location>
        <begin position="217"/>
        <end position="230"/>
    </location>
</feature>
<feature type="compositionally biased region" description="Basic and acidic residues" evidence="4">
    <location>
        <begin position="231"/>
        <end position="261"/>
    </location>
</feature>
<gene>
    <name type="primary">FPR4</name>
    <name type="ORF">UMAG_00026</name>
</gene>
<comment type="function">
    <text evidence="2">PPIase that acts as a histone chaperone. Histone proline isomerase that increases the rate of cis-trans isomerization at prolines on the histone H3 N-terminal tail. Proline isomerization influences H3 methylation thereby regulating gene expression.</text>
</comment>
<comment type="catalytic activity">
    <reaction evidence="2">
        <text>[protein]-peptidylproline (omega=180) = [protein]-peptidylproline (omega=0)</text>
        <dbReference type="Rhea" id="RHEA:16237"/>
        <dbReference type="Rhea" id="RHEA-COMP:10747"/>
        <dbReference type="Rhea" id="RHEA-COMP:10748"/>
        <dbReference type="ChEBI" id="CHEBI:83833"/>
        <dbReference type="ChEBI" id="CHEBI:83834"/>
        <dbReference type="EC" id="5.2.1.8"/>
    </reaction>
</comment>
<comment type="activity regulation">
    <text evidence="1">Inhibited by both FK506 and rapamycin.</text>
</comment>
<comment type="subunit">
    <text evidence="2">Binds to histones H3 and H4.</text>
</comment>
<comment type="subcellular location">
    <subcellularLocation>
        <location evidence="2">Nucleus</location>
    </subcellularLocation>
</comment>
<comment type="similarity">
    <text evidence="5">Belongs to the FKBP-type PPIase family. FKBP3/4 subfamily.</text>
</comment>